<keyword id="KW-0131">Cell cycle</keyword>
<keyword id="KW-0132">Cell division</keyword>
<keyword id="KW-0963">Cytoplasm</keyword>
<keyword id="KW-0498">Mitosis</keyword>
<keyword id="KW-1185">Reference proteome</keyword>
<keyword id="KW-0677">Repeat</keyword>
<keyword id="KW-0853">WD repeat</keyword>
<comment type="function">
    <text evidence="2 3">Substrate-recognition subunit of protein phosphatase 2A (PP2A) that plays a key role in cell cycle by controlling mitosis entry and exit (By similarity). The activity of PP2A complexes containing PPP2R2D (PR55-delta) fluctuate during the cell cycle: the activity is high in interphase and low in mitosis (By similarity).</text>
</comment>
<comment type="subunit">
    <text evidence="2">PP2A consists of a common heterodimeric core enzyme, composed of a 36 kDa catalytic subunit (subunit C) and a 65 kDa constant regulatory subunit (PR65 or subunit A), that associates with a variety of regulatory subunits.</text>
</comment>
<comment type="subcellular location">
    <subcellularLocation>
        <location evidence="1">Cytoplasm</location>
    </subcellularLocation>
</comment>
<comment type="similarity">
    <text evidence="4">Belongs to the phosphatase 2A regulatory subunit B family.</text>
</comment>
<dbReference type="EMBL" id="AJ720649">
    <property type="protein sequence ID" value="CAG32308.1"/>
    <property type="molecule type" value="mRNA"/>
</dbReference>
<dbReference type="RefSeq" id="NP_001006507.1">
    <property type="nucleotide sequence ID" value="NM_001006507.1"/>
</dbReference>
<dbReference type="SMR" id="Q5ZIY5"/>
<dbReference type="FunCoup" id="Q5ZIY5">
    <property type="interactions" value="1137"/>
</dbReference>
<dbReference type="STRING" id="9031.ENSGALP00000047216"/>
<dbReference type="PaxDb" id="9031-ENSGALP00000017035"/>
<dbReference type="GeneID" id="423970"/>
<dbReference type="KEGG" id="gga:423970"/>
<dbReference type="CTD" id="55844"/>
<dbReference type="VEuPathDB" id="HostDB:geneid_423970"/>
<dbReference type="eggNOG" id="KOG1354">
    <property type="taxonomic scope" value="Eukaryota"/>
</dbReference>
<dbReference type="InParanoid" id="Q5ZIY5"/>
<dbReference type="OrthoDB" id="6274823at2759"/>
<dbReference type="PhylomeDB" id="Q5ZIY5"/>
<dbReference type="PRO" id="PR:Q5ZIY5"/>
<dbReference type="Proteomes" id="UP000000539">
    <property type="component" value="Unassembled WGS sequence"/>
</dbReference>
<dbReference type="GO" id="GO:0005829">
    <property type="term" value="C:cytosol"/>
    <property type="evidence" value="ECO:0000318"/>
    <property type="project" value="GO_Central"/>
</dbReference>
<dbReference type="GO" id="GO:0000159">
    <property type="term" value="C:protein phosphatase type 2A complex"/>
    <property type="evidence" value="ECO:0000250"/>
    <property type="project" value="UniProtKB"/>
</dbReference>
<dbReference type="GO" id="GO:0140767">
    <property type="term" value="F:enzyme-substrate adaptor activity"/>
    <property type="evidence" value="ECO:0000250"/>
    <property type="project" value="UniProtKB"/>
</dbReference>
<dbReference type="GO" id="GO:0019888">
    <property type="term" value="F:protein phosphatase regulator activity"/>
    <property type="evidence" value="ECO:0000250"/>
    <property type="project" value="UniProtKB"/>
</dbReference>
<dbReference type="GO" id="GO:0051301">
    <property type="term" value="P:cell division"/>
    <property type="evidence" value="ECO:0007669"/>
    <property type="project" value="UniProtKB-KW"/>
</dbReference>
<dbReference type="GO" id="GO:0010458">
    <property type="term" value="P:exit from mitosis"/>
    <property type="evidence" value="ECO:0000250"/>
    <property type="project" value="UniProtKB"/>
</dbReference>
<dbReference type="GO" id="GO:0000278">
    <property type="term" value="P:mitotic cell cycle"/>
    <property type="evidence" value="ECO:0000250"/>
    <property type="project" value="UniProtKB"/>
</dbReference>
<dbReference type="GO" id="GO:0051983">
    <property type="term" value="P:regulation of chromosome segregation"/>
    <property type="evidence" value="ECO:0000250"/>
    <property type="project" value="UniProtKB"/>
</dbReference>
<dbReference type="FunFam" id="2.130.10.10:FF:000002">
    <property type="entry name" value="Serine/threonine-protein phosphatase 2A 55 kDa regulatory subunit B"/>
    <property type="match status" value="1"/>
</dbReference>
<dbReference type="Gene3D" id="2.130.10.10">
    <property type="entry name" value="YVTN repeat-like/Quinoprotein amine dehydrogenase"/>
    <property type="match status" value="1"/>
</dbReference>
<dbReference type="InterPro" id="IPR000009">
    <property type="entry name" value="PP2A_PR55"/>
</dbReference>
<dbReference type="InterPro" id="IPR018067">
    <property type="entry name" value="PP2A_PR55_CS"/>
</dbReference>
<dbReference type="InterPro" id="IPR015943">
    <property type="entry name" value="WD40/YVTN_repeat-like_dom_sf"/>
</dbReference>
<dbReference type="InterPro" id="IPR036322">
    <property type="entry name" value="WD40_repeat_dom_sf"/>
</dbReference>
<dbReference type="InterPro" id="IPR001680">
    <property type="entry name" value="WD40_rpt"/>
</dbReference>
<dbReference type="PANTHER" id="PTHR11871">
    <property type="entry name" value="PROTEIN PHOSPHATASE PP2A REGULATORY SUBUNIT B"/>
    <property type="match status" value="1"/>
</dbReference>
<dbReference type="PIRSF" id="PIRSF037309">
    <property type="entry name" value="PP2A_PR55"/>
    <property type="match status" value="1"/>
</dbReference>
<dbReference type="PRINTS" id="PR00600">
    <property type="entry name" value="PP2APR55"/>
</dbReference>
<dbReference type="SMART" id="SM00320">
    <property type="entry name" value="WD40"/>
    <property type="match status" value="6"/>
</dbReference>
<dbReference type="SUPFAM" id="SSF50978">
    <property type="entry name" value="WD40 repeat-like"/>
    <property type="match status" value="1"/>
</dbReference>
<dbReference type="PROSITE" id="PS01024">
    <property type="entry name" value="PR55_1"/>
    <property type="match status" value="1"/>
</dbReference>
<dbReference type="PROSITE" id="PS01025">
    <property type="entry name" value="PR55_2"/>
    <property type="match status" value="1"/>
</dbReference>
<protein>
    <recommendedName>
        <fullName>Serine/threonine-protein phosphatase 2A 55 kDa regulatory subunit B delta isoform</fullName>
    </recommendedName>
    <alternativeName>
        <fullName>PP2A subunit B isoform B55-delta</fullName>
    </alternativeName>
    <alternativeName>
        <fullName>PP2A subunit B isoform PR55-delta</fullName>
    </alternativeName>
    <alternativeName>
        <fullName>PP2A subunit B isoform R2-delta</fullName>
    </alternativeName>
    <alternativeName>
        <fullName>PP2A subunit B isoform delta</fullName>
    </alternativeName>
</protein>
<organism>
    <name type="scientific">Gallus gallus</name>
    <name type="common">Chicken</name>
    <dbReference type="NCBI Taxonomy" id="9031"/>
    <lineage>
        <taxon>Eukaryota</taxon>
        <taxon>Metazoa</taxon>
        <taxon>Chordata</taxon>
        <taxon>Craniata</taxon>
        <taxon>Vertebrata</taxon>
        <taxon>Euteleostomi</taxon>
        <taxon>Archelosauria</taxon>
        <taxon>Archosauria</taxon>
        <taxon>Dinosauria</taxon>
        <taxon>Saurischia</taxon>
        <taxon>Theropoda</taxon>
        <taxon>Coelurosauria</taxon>
        <taxon>Aves</taxon>
        <taxon>Neognathae</taxon>
        <taxon>Galloanserae</taxon>
        <taxon>Galliformes</taxon>
        <taxon>Phasianidae</taxon>
        <taxon>Phasianinae</taxon>
        <taxon>Gallus</taxon>
    </lineage>
</organism>
<proteinExistence type="evidence at transcript level"/>
<evidence type="ECO:0000250" key="1">
    <source>
        <dbReference type="UniProtKB" id="P56932"/>
    </source>
</evidence>
<evidence type="ECO:0000250" key="2">
    <source>
        <dbReference type="UniProtKB" id="Q7ZX64"/>
    </source>
</evidence>
<evidence type="ECO:0000250" key="3">
    <source>
        <dbReference type="UniProtKB" id="Q925E7"/>
    </source>
</evidence>
<evidence type="ECO:0000305" key="4"/>
<reference key="1">
    <citation type="journal article" date="2005" name="Genome Biol.">
        <title>Full-length cDNAs from chicken bursal lymphocytes to facilitate gene function analysis.</title>
        <authorList>
            <person name="Caldwell R.B."/>
            <person name="Kierzek A.M."/>
            <person name="Arakawa H."/>
            <person name="Bezzubov Y."/>
            <person name="Zaim J."/>
            <person name="Fiedler P."/>
            <person name="Kutter S."/>
            <person name="Blagodatski A."/>
            <person name="Kostovska D."/>
            <person name="Koter M."/>
            <person name="Plachy J."/>
            <person name="Carninci P."/>
            <person name="Hayashizaki Y."/>
            <person name="Buerstedde J.-M."/>
        </authorList>
    </citation>
    <scope>NUCLEOTIDE SEQUENCE [LARGE SCALE MRNA]</scope>
    <source>
        <strain>CB</strain>
        <tissue>Bursa of Fabricius</tissue>
    </source>
</reference>
<gene>
    <name type="primary">PPP2R2D</name>
    <name type="ORF">RCJMB04_22l15</name>
</gene>
<feature type="chain" id="PRO_0000071436" description="Serine/threonine-protein phosphatase 2A 55 kDa regulatory subunit B delta isoform">
    <location>
        <begin position="1"/>
        <end position="451"/>
    </location>
</feature>
<feature type="repeat" description="WD 1">
    <location>
        <begin position="30"/>
        <end position="69"/>
    </location>
</feature>
<feature type="repeat" description="WD 2">
    <location>
        <begin position="95"/>
        <end position="136"/>
    </location>
</feature>
<feature type="repeat" description="WD 3">
    <location>
        <begin position="179"/>
        <end position="217"/>
    </location>
</feature>
<feature type="repeat" description="WD 4">
    <location>
        <begin position="228"/>
        <end position="268"/>
    </location>
</feature>
<feature type="repeat" description="WD 5">
    <location>
        <begin position="287"/>
        <end position="325"/>
    </location>
</feature>
<feature type="repeat" description="WD 6">
    <location>
        <begin position="342"/>
        <end position="383"/>
    </location>
</feature>
<feature type="repeat" description="WD 7">
    <location>
        <begin position="418"/>
        <end position="451"/>
    </location>
</feature>
<sequence>MAGVAGGGGNGNDFQWCFSQVQGAVDEDVAEADIISTVEFNYSGDLLATGDKGGRVVIFQREQENKSRPHSRGEYNVYSTFQSHEPEFDYLKSLEIEEKINKIRWLPQQNAAHFLLSTNDKTIKLWKISERDKRAEGYNLKDEDGRLRDPFKITALRVPILKPMDLMVEASPRRIFANAHTYHINSISVNSDHETYLSADDLRINLWHLEITDRSFNIVDIKPANMEELTEVITAAEFHPHHCNVFVYSSSKGTIRLCDMRSSALCDRHSKFFEEPEDPSSRSFFSEIISSISDVKFSHSGRYMMTRDYLSVKVWDLNMENRPVETYQVHEYLRSKLCSLYENDCIFDKFECCWNGSDGAIMTGSYNNFFRMFDRNTRRDITLEASRESSKPRAILKPRKVCTGGKRKKDEINVDSLDFNKKILHTAWHPMENIIAVAATNNLYIFQDKIN</sequence>
<accession>Q5ZIY5</accession>
<name>2ABD_CHICK</name>